<accession>Q1ACK9</accession>
<reference key="1">
    <citation type="journal article" date="2006" name="Mol. Biol. Evol.">
        <title>The chloroplast genome sequence of Chara vulgaris sheds new light into the closest green algal relatives of land plants.</title>
        <authorList>
            <person name="Turmel M."/>
            <person name="Otis C."/>
            <person name="Lemieux C."/>
        </authorList>
    </citation>
    <scope>NUCLEOTIDE SEQUENCE [LARGE SCALE GENOMIC DNA]</scope>
</reference>
<feature type="chain" id="PRO_0000355921" description="Maturase K">
    <location>
        <begin position="1"/>
        <end position="516"/>
    </location>
</feature>
<geneLocation type="chloroplast"/>
<dbReference type="EMBL" id="DQ229107">
    <property type="protein sequence ID" value="ABA61916.1"/>
    <property type="molecule type" value="Genomic_DNA"/>
</dbReference>
<dbReference type="GO" id="GO:0009507">
    <property type="term" value="C:chloroplast"/>
    <property type="evidence" value="ECO:0007669"/>
    <property type="project" value="UniProtKB-SubCell"/>
</dbReference>
<dbReference type="GO" id="GO:0003723">
    <property type="term" value="F:RNA binding"/>
    <property type="evidence" value="ECO:0007669"/>
    <property type="project" value="UniProtKB-KW"/>
</dbReference>
<dbReference type="GO" id="GO:0006397">
    <property type="term" value="P:mRNA processing"/>
    <property type="evidence" value="ECO:0007669"/>
    <property type="project" value="UniProtKB-KW"/>
</dbReference>
<dbReference type="GO" id="GO:0008380">
    <property type="term" value="P:RNA splicing"/>
    <property type="evidence" value="ECO:0007669"/>
    <property type="project" value="UniProtKB-UniRule"/>
</dbReference>
<dbReference type="GO" id="GO:0008033">
    <property type="term" value="P:tRNA processing"/>
    <property type="evidence" value="ECO:0007669"/>
    <property type="project" value="UniProtKB-KW"/>
</dbReference>
<dbReference type="HAMAP" id="MF_01390">
    <property type="entry name" value="MatK"/>
    <property type="match status" value="1"/>
</dbReference>
<dbReference type="InterPro" id="IPR024937">
    <property type="entry name" value="Domain_X"/>
</dbReference>
<dbReference type="InterPro" id="IPR002866">
    <property type="entry name" value="Maturase_MatK"/>
</dbReference>
<dbReference type="InterPro" id="IPR024942">
    <property type="entry name" value="Maturase_MatK_N"/>
</dbReference>
<dbReference type="PANTHER" id="PTHR34811">
    <property type="entry name" value="MATURASE K"/>
    <property type="match status" value="1"/>
</dbReference>
<dbReference type="PANTHER" id="PTHR34811:SF1">
    <property type="entry name" value="MATURASE K"/>
    <property type="match status" value="1"/>
</dbReference>
<dbReference type="Pfam" id="PF01348">
    <property type="entry name" value="Intron_maturas2"/>
    <property type="match status" value="1"/>
</dbReference>
<dbReference type="Pfam" id="PF01824">
    <property type="entry name" value="MatK_N"/>
    <property type="match status" value="1"/>
</dbReference>
<organism>
    <name type="scientific">Chara vulgaris</name>
    <name type="common">Common stonewort</name>
    <dbReference type="NCBI Taxonomy" id="55564"/>
    <lineage>
        <taxon>Eukaryota</taxon>
        <taxon>Viridiplantae</taxon>
        <taxon>Streptophyta</taxon>
        <taxon>Charophyceae</taxon>
        <taxon>Charales</taxon>
        <taxon>Characeae</taxon>
        <taxon>Chara</taxon>
    </lineage>
</organism>
<gene>
    <name evidence="1" type="primary">matK</name>
</gene>
<evidence type="ECO:0000255" key="1">
    <source>
        <dbReference type="HAMAP-Rule" id="MF_01390"/>
    </source>
</evidence>
<comment type="function">
    <text evidence="1">Usually encoded in the trnK tRNA gene intron. Probably assists in splicing its own and other chloroplast group II introns.</text>
</comment>
<comment type="subcellular location">
    <subcellularLocation>
        <location>Plastid</location>
        <location>Chloroplast</location>
    </subcellularLocation>
</comment>
<comment type="similarity">
    <text evidence="1">Belongs to the intron maturase 2 family. MatK subfamily.</text>
</comment>
<proteinExistence type="inferred from homology"/>
<keyword id="KW-0150">Chloroplast</keyword>
<keyword id="KW-0507">mRNA processing</keyword>
<keyword id="KW-0934">Plastid</keyword>
<keyword id="KW-0694">RNA-binding</keyword>
<keyword id="KW-0819">tRNA processing</keyword>
<sequence>MNLISKKNELKQGFYPLFFLEEFYTRVLIHMNHNHILKIGNIKESKLIHVNRICHYLLIKRLIRQIRKQSHKYNGISEFPNYETEFYFQYKNRFYNLIIENAFLLILQMIWQHQKTRKNDPSILIHRSIQSAFPFLEKKIIHCIWIIHGKIQLFHTIEQFNFLFLLLYERIRDKSFLHLLKNILNLNKEFLIEKFYCEKFHLIELSMFFRNLYINEFDSFIVYHIVKTWKLAYLLNPIKAIDDFSFIQKNDILLNIKRKQKRLPLVCWLANKSFYSLYGNIHYVRRDLSFLMAIQAGKHISRFWKYNCIKFLQLKLGFPCSLDVLYLKSLFNQDFLFLGYRIVNKLWKKNFKIRAVSWYSPILFFLKGRRISTKMPVFNLIDRLSVMHLCNLEGYPIHKAAWSVFNDKQIMNIFSNLLRNILFYYSGCSNRSDLGKIQYILEFSCMKTLAFKHKSSIRSTWTQYKKHVSFLSLVKNRHKNGKTSVDLYFLFQKTNKFWLLDLSKIQDSLACFILMD</sequence>
<name>MATK_CHAVU</name>
<protein>
    <recommendedName>
        <fullName evidence="1">Maturase K</fullName>
    </recommendedName>
    <alternativeName>
        <fullName evidence="1">Intron maturase</fullName>
    </alternativeName>
</protein>